<name>FAL1_GIBZE</name>
<keyword id="KW-0067">ATP-binding</keyword>
<keyword id="KW-0347">Helicase</keyword>
<keyword id="KW-0378">Hydrolase</keyword>
<keyword id="KW-0547">Nucleotide-binding</keyword>
<keyword id="KW-0539">Nucleus</keyword>
<keyword id="KW-1185">Reference proteome</keyword>
<keyword id="KW-0690">Ribosome biogenesis</keyword>
<keyword id="KW-0694">RNA-binding</keyword>
<keyword id="KW-0698">rRNA processing</keyword>
<proteinExistence type="inferred from homology"/>
<gene>
    <name type="primary">FAL1</name>
    <name type="ORF">FGRRES_05858</name>
    <name type="ORF">FGSG_05858</name>
</gene>
<sequence length="401" mass="45567">MAEGSGIDRKADERMEFSTSKEVTVHPTFESMSLKENLLRGIYAYGYESPSAVQSRAIVQVCKGRDTIAQAQSGTGKTATFSISMLQVIDTAVRETQALVLSPTRELATQIQSVVMALGDYMNVQCHACIGGTNVGEDIRKLDYGQHIVSGTPGRVADMIRRRHLRTRHIKMLVLDEADELLNKGFREQIYDVYRYLPPATQVVVVSATLPYDVLDMTTKFMTDPVRILVKRDELTLEGLKQYFIAVEKEDWKFDTLCDLYDTLTITQAVIFCNTRRKVDWLTDKMREANFTVSSMHGDMPQKERDSIMQDFRQGNSRVLISTDVWARGIDVQQVSLVINYDLPSNRENYIHRIGRSGRFGRKGVAINFVTTEDVRILRDIELYYSTQIDEMPMNVADLIA</sequence>
<organism>
    <name type="scientific">Gibberella zeae (strain ATCC MYA-4620 / CBS 123657 / FGSC 9075 / NRRL 31084 / PH-1)</name>
    <name type="common">Wheat head blight fungus</name>
    <name type="synonym">Fusarium graminearum</name>
    <dbReference type="NCBI Taxonomy" id="229533"/>
    <lineage>
        <taxon>Eukaryota</taxon>
        <taxon>Fungi</taxon>
        <taxon>Dikarya</taxon>
        <taxon>Ascomycota</taxon>
        <taxon>Pezizomycotina</taxon>
        <taxon>Sordariomycetes</taxon>
        <taxon>Hypocreomycetidae</taxon>
        <taxon>Hypocreales</taxon>
        <taxon>Nectriaceae</taxon>
        <taxon>Fusarium</taxon>
    </lineage>
</organism>
<feature type="chain" id="PRO_0000232148" description="ATP-dependent RNA helicase FAL1">
    <location>
        <begin position="1"/>
        <end position="401"/>
    </location>
</feature>
<feature type="domain" description="Helicase ATP-binding" evidence="2">
    <location>
        <begin position="58"/>
        <end position="228"/>
    </location>
</feature>
<feature type="domain" description="Helicase C-terminal" evidence="3">
    <location>
        <begin position="239"/>
        <end position="400"/>
    </location>
</feature>
<feature type="short sequence motif" description="Q motif">
    <location>
        <begin position="27"/>
        <end position="55"/>
    </location>
</feature>
<feature type="short sequence motif" description="DEAD box">
    <location>
        <begin position="176"/>
        <end position="179"/>
    </location>
</feature>
<feature type="binding site" evidence="2">
    <location>
        <begin position="71"/>
        <end position="78"/>
    </location>
    <ligand>
        <name>ATP</name>
        <dbReference type="ChEBI" id="CHEBI:30616"/>
    </ligand>
</feature>
<protein>
    <recommendedName>
        <fullName>ATP-dependent RNA helicase FAL1</fullName>
        <ecNumber>3.6.4.13</ecNumber>
    </recommendedName>
</protein>
<evidence type="ECO:0000250" key="1"/>
<evidence type="ECO:0000255" key="2">
    <source>
        <dbReference type="PROSITE-ProRule" id="PRU00541"/>
    </source>
</evidence>
<evidence type="ECO:0000255" key="3">
    <source>
        <dbReference type="PROSITE-ProRule" id="PRU00542"/>
    </source>
</evidence>
<evidence type="ECO:0000305" key="4"/>
<accession>Q4IAA0</accession>
<accession>A0A0E0SIW1</accession>
<accession>V6RB65</accession>
<reference key="1">
    <citation type="journal article" date="2007" name="Science">
        <title>The Fusarium graminearum genome reveals a link between localized polymorphism and pathogen specialization.</title>
        <authorList>
            <person name="Cuomo C.A."/>
            <person name="Gueldener U."/>
            <person name="Xu J.-R."/>
            <person name="Trail F."/>
            <person name="Turgeon B.G."/>
            <person name="Di Pietro A."/>
            <person name="Walton J.D."/>
            <person name="Ma L.-J."/>
            <person name="Baker S.E."/>
            <person name="Rep M."/>
            <person name="Adam G."/>
            <person name="Antoniw J."/>
            <person name="Baldwin T."/>
            <person name="Calvo S.E."/>
            <person name="Chang Y.-L."/>
            <person name="DeCaprio D."/>
            <person name="Gale L.R."/>
            <person name="Gnerre S."/>
            <person name="Goswami R.S."/>
            <person name="Hammond-Kosack K."/>
            <person name="Harris L.J."/>
            <person name="Hilburn K."/>
            <person name="Kennell J.C."/>
            <person name="Kroken S."/>
            <person name="Magnuson J.K."/>
            <person name="Mannhaupt G."/>
            <person name="Mauceli E.W."/>
            <person name="Mewes H.-W."/>
            <person name="Mitterbauer R."/>
            <person name="Muehlbauer G."/>
            <person name="Muensterkoetter M."/>
            <person name="Nelson D."/>
            <person name="O'Donnell K."/>
            <person name="Ouellet T."/>
            <person name="Qi W."/>
            <person name="Quesneville H."/>
            <person name="Roncero M.I.G."/>
            <person name="Seong K.-Y."/>
            <person name="Tetko I.V."/>
            <person name="Urban M."/>
            <person name="Waalwijk C."/>
            <person name="Ward T.J."/>
            <person name="Yao J."/>
            <person name="Birren B.W."/>
            <person name="Kistler H.C."/>
        </authorList>
    </citation>
    <scope>NUCLEOTIDE SEQUENCE [LARGE SCALE GENOMIC DNA]</scope>
    <source>
        <strain>ATCC MYA-4620 / CBS 123657 / FGSC 9075 / NRRL 31084 / PH-1</strain>
    </source>
</reference>
<reference key="2">
    <citation type="journal article" date="2010" name="Nature">
        <title>Comparative genomics reveals mobile pathogenicity chromosomes in Fusarium.</title>
        <authorList>
            <person name="Ma L.-J."/>
            <person name="van der Does H.C."/>
            <person name="Borkovich K.A."/>
            <person name="Coleman J.J."/>
            <person name="Daboussi M.-J."/>
            <person name="Di Pietro A."/>
            <person name="Dufresne M."/>
            <person name="Freitag M."/>
            <person name="Grabherr M."/>
            <person name="Henrissat B."/>
            <person name="Houterman P.M."/>
            <person name="Kang S."/>
            <person name="Shim W.-B."/>
            <person name="Woloshuk C."/>
            <person name="Xie X."/>
            <person name="Xu J.-R."/>
            <person name="Antoniw J."/>
            <person name="Baker S.E."/>
            <person name="Bluhm B.H."/>
            <person name="Breakspear A."/>
            <person name="Brown D.W."/>
            <person name="Butchko R.A.E."/>
            <person name="Chapman S."/>
            <person name="Coulson R."/>
            <person name="Coutinho P.M."/>
            <person name="Danchin E.G.J."/>
            <person name="Diener A."/>
            <person name="Gale L.R."/>
            <person name="Gardiner D.M."/>
            <person name="Goff S."/>
            <person name="Hammond-Kosack K.E."/>
            <person name="Hilburn K."/>
            <person name="Hua-Van A."/>
            <person name="Jonkers W."/>
            <person name="Kazan K."/>
            <person name="Kodira C.D."/>
            <person name="Koehrsen M."/>
            <person name="Kumar L."/>
            <person name="Lee Y.-H."/>
            <person name="Li L."/>
            <person name="Manners J.M."/>
            <person name="Miranda-Saavedra D."/>
            <person name="Mukherjee M."/>
            <person name="Park G."/>
            <person name="Park J."/>
            <person name="Park S.-Y."/>
            <person name="Proctor R.H."/>
            <person name="Regev A."/>
            <person name="Ruiz-Roldan M.C."/>
            <person name="Sain D."/>
            <person name="Sakthikumar S."/>
            <person name="Sykes S."/>
            <person name="Schwartz D.C."/>
            <person name="Turgeon B.G."/>
            <person name="Wapinski I."/>
            <person name="Yoder O."/>
            <person name="Young S."/>
            <person name="Zeng Q."/>
            <person name="Zhou S."/>
            <person name="Galagan J."/>
            <person name="Cuomo C.A."/>
            <person name="Kistler H.C."/>
            <person name="Rep M."/>
        </authorList>
    </citation>
    <scope>GENOME REANNOTATION</scope>
    <source>
        <strain>ATCC MYA-4620 / CBS 123657 / FGSC 9075 / NRRL 31084 / PH-1</strain>
    </source>
</reference>
<reference key="3">
    <citation type="journal article" date="2015" name="BMC Genomics">
        <title>The completed genome sequence of the pathogenic ascomycete fungus Fusarium graminearum.</title>
        <authorList>
            <person name="King R."/>
            <person name="Urban M."/>
            <person name="Hammond-Kosack M.C.U."/>
            <person name="Hassani-Pak K."/>
            <person name="Hammond-Kosack K.E."/>
        </authorList>
    </citation>
    <scope>NUCLEOTIDE SEQUENCE [LARGE SCALE GENOMIC DNA]</scope>
    <source>
        <strain>ATCC MYA-4620 / CBS 123657 / FGSC 9075 / NRRL 31084 / PH-1</strain>
    </source>
</reference>
<dbReference type="EC" id="3.6.4.13"/>
<dbReference type="EMBL" id="DS231665">
    <property type="protein sequence ID" value="ESU11883.1"/>
    <property type="molecule type" value="Genomic_DNA"/>
</dbReference>
<dbReference type="EMBL" id="HG970334">
    <property type="protein sequence ID" value="CEF86374.1"/>
    <property type="molecule type" value="Genomic_DNA"/>
</dbReference>
<dbReference type="RefSeq" id="XP_011324459.1">
    <property type="nucleotide sequence ID" value="XM_011326157.1"/>
</dbReference>
<dbReference type="SMR" id="Q4IAA0"/>
<dbReference type="FunCoup" id="Q4IAA0">
    <property type="interactions" value="648"/>
</dbReference>
<dbReference type="STRING" id="229533.Q4IAA0"/>
<dbReference type="GeneID" id="23553015"/>
<dbReference type="KEGG" id="fgr:FGSG_05858"/>
<dbReference type="VEuPathDB" id="FungiDB:FGRAMPH1_01G18931"/>
<dbReference type="eggNOG" id="KOG0328">
    <property type="taxonomic scope" value="Eukaryota"/>
</dbReference>
<dbReference type="HOGENOM" id="CLU_003041_1_0_1"/>
<dbReference type="InParanoid" id="Q4IAA0"/>
<dbReference type="OrthoDB" id="31644at110618"/>
<dbReference type="Proteomes" id="UP000070720">
    <property type="component" value="Chromosome 3"/>
</dbReference>
<dbReference type="GO" id="GO:0005730">
    <property type="term" value="C:nucleolus"/>
    <property type="evidence" value="ECO:0007669"/>
    <property type="project" value="UniProtKB-SubCell"/>
</dbReference>
<dbReference type="GO" id="GO:0005524">
    <property type="term" value="F:ATP binding"/>
    <property type="evidence" value="ECO:0007669"/>
    <property type="project" value="UniProtKB-KW"/>
</dbReference>
<dbReference type="GO" id="GO:0016887">
    <property type="term" value="F:ATP hydrolysis activity"/>
    <property type="evidence" value="ECO:0007669"/>
    <property type="project" value="RHEA"/>
</dbReference>
<dbReference type="GO" id="GO:0003723">
    <property type="term" value="F:RNA binding"/>
    <property type="evidence" value="ECO:0007669"/>
    <property type="project" value="UniProtKB-KW"/>
</dbReference>
<dbReference type="GO" id="GO:0003724">
    <property type="term" value="F:RNA helicase activity"/>
    <property type="evidence" value="ECO:0007669"/>
    <property type="project" value="UniProtKB-EC"/>
</dbReference>
<dbReference type="GO" id="GO:0006364">
    <property type="term" value="P:rRNA processing"/>
    <property type="evidence" value="ECO:0007669"/>
    <property type="project" value="UniProtKB-KW"/>
</dbReference>
<dbReference type="CDD" id="cd18045">
    <property type="entry name" value="DEADc_EIF4AIII_DDX48"/>
    <property type="match status" value="1"/>
</dbReference>
<dbReference type="CDD" id="cd18787">
    <property type="entry name" value="SF2_C_DEAD"/>
    <property type="match status" value="1"/>
</dbReference>
<dbReference type="FunFam" id="3.40.50.300:FF:000031">
    <property type="entry name" value="Eukaryotic initiation factor 4A-III"/>
    <property type="match status" value="1"/>
</dbReference>
<dbReference type="FunFam" id="3.40.50.300:FF:000498">
    <property type="entry name" value="Eukaryotic initiation factor 4A-III"/>
    <property type="match status" value="1"/>
</dbReference>
<dbReference type="Gene3D" id="3.40.50.300">
    <property type="entry name" value="P-loop containing nucleotide triphosphate hydrolases"/>
    <property type="match status" value="2"/>
</dbReference>
<dbReference type="InterPro" id="IPR011545">
    <property type="entry name" value="DEAD/DEAH_box_helicase_dom"/>
</dbReference>
<dbReference type="InterPro" id="IPR014001">
    <property type="entry name" value="Helicase_ATP-bd"/>
</dbReference>
<dbReference type="InterPro" id="IPR001650">
    <property type="entry name" value="Helicase_C-like"/>
</dbReference>
<dbReference type="InterPro" id="IPR027417">
    <property type="entry name" value="P-loop_NTPase"/>
</dbReference>
<dbReference type="InterPro" id="IPR000629">
    <property type="entry name" value="RNA-helicase_DEAD-box_CS"/>
</dbReference>
<dbReference type="InterPro" id="IPR014014">
    <property type="entry name" value="RNA_helicase_DEAD_Q_motif"/>
</dbReference>
<dbReference type="PANTHER" id="PTHR47958">
    <property type="entry name" value="ATP-DEPENDENT RNA HELICASE DBP3"/>
    <property type="match status" value="1"/>
</dbReference>
<dbReference type="Pfam" id="PF00270">
    <property type="entry name" value="DEAD"/>
    <property type="match status" value="1"/>
</dbReference>
<dbReference type="Pfam" id="PF00271">
    <property type="entry name" value="Helicase_C"/>
    <property type="match status" value="1"/>
</dbReference>
<dbReference type="SMART" id="SM00487">
    <property type="entry name" value="DEXDc"/>
    <property type="match status" value="1"/>
</dbReference>
<dbReference type="SMART" id="SM00490">
    <property type="entry name" value="HELICc"/>
    <property type="match status" value="1"/>
</dbReference>
<dbReference type="SUPFAM" id="SSF52540">
    <property type="entry name" value="P-loop containing nucleoside triphosphate hydrolases"/>
    <property type="match status" value="1"/>
</dbReference>
<dbReference type="PROSITE" id="PS00039">
    <property type="entry name" value="DEAD_ATP_HELICASE"/>
    <property type="match status" value="1"/>
</dbReference>
<dbReference type="PROSITE" id="PS51192">
    <property type="entry name" value="HELICASE_ATP_BIND_1"/>
    <property type="match status" value="1"/>
</dbReference>
<dbReference type="PROSITE" id="PS51194">
    <property type="entry name" value="HELICASE_CTER"/>
    <property type="match status" value="1"/>
</dbReference>
<dbReference type="PROSITE" id="PS51195">
    <property type="entry name" value="Q_MOTIF"/>
    <property type="match status" value="1"/>
</dbReference>
<comment type="function">
    <text evidence="1">ATP-dependent RNA helicase involved in 40S ribosomal subunit biogenesis. Required for the processing and cleavage of 35S pre-rRNA at sites A0, A1, and A2, leading to mature 18S rRNA (By similarity).</text>
</comment>
<comment type="catalytic activity">
    <reaction>
        <text>ATP + H2O = ADP + phosphate + H(+)</text>
        <dbReference type="Rhea" id="RHEA:13065"/>
        <dbReference type="ChEBI" id="CHEBI:15377"/>
        <dbReference type="ChEBI" id="CHEBI:15378"/>
        <dbReference type="ChEBI" id="CHEBI:30616"/>
        <dbReference type="ChEBI" id="CHEBI:43474"/>
        <dbReference type="ChEBI" id="CHEBI:456216"/>
        <dbReference type="EC" id="3.6.4.13"/>
    </reaction>
</comment>
<comment type="subcellular location">
    <subcellularLocation>
        <location evidence="1">Nucleus</location>
        <location evidence="1">Nucleolus</location>
    </subcellularLocation>
</comment>
<comment type="domain">
    <text>The Q motif is unique to and characteristic of the DEAD box family of RNA helicases and controls ATP binding and hydrolysis.</text>
</comment>
<comment type="similarity">
    <text evidence="4">Belongs to the DEAD box helicase family. DDX48/FAL1 subfamily.</text>
</comment>